<dbReference type="EC" id="6.1.1.3" evidence="1"/>
<dbReference type="EMBL" id="BX248358">
    <property type="protein sequence ID" value="CAE49919.1"/>
    <property type="molecule type" value="Genomic_DNA"/>
</dbReference>
<dbReference type="RefSeq" id="WP_010935033.1">
    <property type="nucleotide sequence ID" value="NC_002935.2"/>
</dbReference>
<dbReference type="SMR" id="Q6NGW2"/>
<dbReference type="STRING" id="257309.DIP1388"/>
<dbReference type="KEGG" id="cdi:DIP1388"/>
<dbReference type="HOGENOM" id="CLU_008554_0_1_11"/>
<dbReference type="Proteomes" id="UP000002198">
    <property type="component" value="Chromosome"/>
</dbReference>
<dbReference type="GO" id="GO:0005737">
    <property type="term" value="C:cytoplasm"/>
    <property type="evidence" value="ECO:0007669"/>
    <property type="project" value="UniProtKB-SubCell"/>
</dbReference>
<dbReference type="GO" id="GO:0005524">
    <property type="term" value="F:ATP binding"/>
    <property type="evidence" value="ECO:0007669"/>
    <property type="project" value="UniProtKB-UniRule"/>
</dbReference>
<dbReference type="GO" id="GO:0046872">
    <property type="term" value="F:metal ion binding"/>
    <property type="evidence" value="ECO:0007669"/>
    <property type="project" value="UniProtKB-KW"/>
</dbReference>
<dbReference type="GO" id="GO:0004829">
    <property type="term" value="F:threonine-tRNA ligase activity"/>
    <property type="evidence" value="ECO:0007669"/>
    <property type="project" value="UniProtKB-UniRule"/>
</dbReference>
<dbReference type="GO" id="GO:0000049">
    <property type="term" value="F:tRNA binding"/>
    <property type="evidence" value="ECO:0007669"/>
    <property type="project" value="UniProtKB-KW"/>
</dbReference>
<dbReference type="GO" id="GO:0006435">
    <property type="term" value="P:threonyl-tRNA aminoacylation"/>
    <property type="evidence" value="ECO:0007669"/>
    <property type="project" value="UniProtKB-UniRule"/>
</dbReference>
<dbReference type="CDD" id="cd00860">
    <property type="entry name" value="ThrRS_anticodon"/>
    <property type="match status" value="1"/>
</dbReference>
<dbReference type="CDD" id="cd00771">
    <property type="entry name" value="ThrRS_core"/>
    <property type="match status" value="1"/>
</dbReference>
<dbReference type="FunFam" id="3.30.930.10:FF:000019">
    <property type="entry name" value="Threonine--tRNA ligase"/>
    <property type="match status" value="1"/>
</dbReference>
<dbReference type="FunFam" id="3.40.50.800:FF:000001">
    <property type="entry name" value="Threonine--tRNA ligase"/>
    <property type="match status" value="1"/>
</dbReference>
<dbReference type="FunFam" id="3.30.980.10:FF:000005">
    <property type="entry name" value="Threonyl-tRNA synthetase, mitochondrial"/>
    <property type="match status" value="1"/>
</dbReference>
<dbReference type="Gene3D" id="3.30.54.20">
    <property type="match status" value="1"/>
</dbReference>
<dbReference type="Gene3D" id="3.40.50.800">
    <property type="entry name" value="Anticodon-binding domain"/>
    <property type="match status" value="1"/>
</dbReference>
<dbReference type="Gene3D" id="3.30.930.10">
    <property type="entry name" value="Bira Bifunctional Protein, Domain 2"/>
    <property type="match status" value="1"/>
</dbReference>
<dbReference type="Gene3D" id="3.30.980.10">
    <property type="entry name" value="Threonyl-trna Synthetase, Chain A, domain 2"/>
    <property type="match status" value="1"/>
</dbReference>
<dbReference type="HAMAP" id="MF_00184">
    <property type="entry name" value="Thr_tRNA_synth"/>
    <property type="match status" value="1"/>
</dbReference>
<dbReference type="InterPro" id="IPR002314">
    <property type="entry name" value="aa-tRNA-synt_IIb"/>
</dbReference>
<dbReference type="InterPro" id="IPR006195">
    <property type="entry name" value="aa-tRNA-synth_II"/>
</dbReference>
<dbReference type="InterPro" id="IPR045864">
    <property type="entry name" value="aa-tRNA-synth_II/BPL/LPL"/>
</dbReference>
<dbReference type="InterPro" id="IPR004154">
    <property type="entry name" value="Anticodon-bd"/>
</dbReference>
<dbReference type="InterPro" id="IPR036621">
    <property type="entry name" value="Anticodon-bd_dom_sf"/>
</dbReference>
<dbReference type="InterPro" id="IPR004095">
    <property type="entry name" value="TGS"/>
</dbReference>
<dbReference type="InterPro" id="IPR002320">
    <property type="entry name" value="Thr-tRNA-ligase_IIa"/>
</dbReference>
<dbReference type="InterPro" id="IPR018163">
    <property type="entry name" value="Thr/Ala-tRNA-synth_IIc_edit"/>
</dbReference>
<dbReference type="InterPro" id="IPR047246">
    <property type="entry name" value="ThrRS_anticodon"/>
</dbReference>
<dbReference type="InterPro" id="IPR033728">
    <property type="entry name" value="ThrRS_core"/>
</dbReference>
<dbReference type="InterPro" id="IPR012947">
    <property type="entry name" value="tRNA_SAD"/>
</dbReference>
<dbReference type="NCBIfam" id="TIGR00418">
    <property type="entry name" value="thrS"/>
    <property type="match status" value="1"/>
</dbReference>
<dbReference type="PANTHER" id="PTHR11451:SF44">
    <property type="entry name" value="THREONINE--TRNA LIGASE, CHLOROPLASTIC_MITOCHONDRIAL 2"/>
    <property type="match status" value="1"/>
</dbReference>
<dbReference type="PANTHER" id="PTHR11451">
    <property type="entry name" value="THREONINE-TRNA LIGASE"/>
    <property type="match status" value="1"/>
</dbReference>
<dbReference type="Pfam" id="PF03129">
    <property type="entry name" value="HGTP_anticodon"/>
    <property type="match status" value="1"/>
</dbReference>
<dbReference type="Pfam" id="PF00587">
    <property type="entry name" value="tRNA-synt_2b"/>
    <property type="match status" value="1"/>
</dbReference>
<dbReference type="Pfam" id="PF07973">
    <property type="entry name" value="tRNA_SAD"/>
    <property type="match status" value="1"/>
</dbReference>
<dbReference type="PRINTS" id="PR01047">
    <property type="entry name" value="TRNASYNTHTHR"/>
</dbReference>
<dbReference type="SMART" id="SM00863">
    <property type="entry name" value="tRNA_SAD"/>
    <property type="match status" value="1"/>
</dbReference>
<dbReference type="SUPFAM" id="SSF52954">
    <property type="entry name" value="Class II aaRS ABD-related"/>
    <property type="match status" value="1"/>
</dbReference>
<dbReference type="SUPFAM" id="SSF55681">
    <property type="entry name" value="Class II aaRS and biotin synthetases"/>
    <property type="match status" value="1"/>
</dbReference>
<dbReference type="SUPFAM" id="SSF55186">
    <property type="entry name" value="ThrRS/AlaRS common domain"/>
    <property type="match status" value="1"/>
</dbReference>
<dbReference type="PROSITE" id="PS50862">
    <property type="entry name" value="AA_TRNA_LIGASE_II"/>
    <property type="match status" value="1"/>
</dbReference>
<dbReference type="PROSITE" id="PS51880">
    <property type="entry name" value="TGS"/>
    <property type="match status" value="1"/>
</dbReference>
<proteinExistence type="inferred from homology"/>
<feature type="chain" id="PRO_0000100968" description="Threonine--tRNA ligase">
    <location>
        <begin position="1"/>
        <end position="687"/>
    </location>
</feature>
<feature type="domain" description="TGS" evidence="2">
    <location>
        <begin position="1"/>
        <end position="67"/>
    </location>
</feature>
<feature type="region of interest" description="Catalytic" evidence="1">
    <location>
        <begin position="266"/>
        <end position="572"/>
    </location>
</feature>
<feature type="binding site" evidence="1">
    <location>
        <position position="371"/>
    </location>
    <ligand>
        <name>Zn(2+)</name>
        <dbReference type="ChEBI" id="CHEBI:29105"/>
    </ligand>
</feature>
<feature type="binding site" evidence="1">
    <location>
        <position position="422"/>
    </location>
    <ligand>
        <name>Zn(2+)</name>
        <dbReference type="ChEBI" id="CHEBI:29105"/>
    </ligand>
</feature>
<feature type="binding site" evidence="1">
    <location>
        <position position="549"/>
    </location>
    <ligand>
        <name>Zn(2+)</name>
        <dbReference type="ChEBI" id="CHEBI:29105"/>
    </ligand>
</feature>
<comment type="function">
    <text evidence="1">Catalyzes the attachment of threonine to tRNA(Thr) in a two-step reaction: L-threonine is first activated by ATP to form Thr-AMP and then transferred to the acceptor end of tRNA(Thr). Also edits incorrectly charged L-seryl-tRNA(Thr).</text>
</comment>
<comment type="catalytic activity">
    <reaction evidence="1">
        <text>tRNA(Thr) + L-threonine + ATP = L-threonyl-tRNA(Thr) + AMP + diphosphate + H(+)</text>
        <dbReference type="Rhea" id="RHEA:24624"/>
        <dbReference type="Rhea" id="RHEA-COMP:9670"/>
        <dbReference type="Rhea" id="RHEA-COMP:9704"/>
        <dbReference type="ChEBI" id="CHEBI:15378"/>
        <dbReference type="ChEBI" id="CHEBI:30616"/>
        <dbReference type="ChEBI" id="CHEBI:33019"/>
        <dbReference type="ChEBI" id="CHEBI:57926"/>
        <dbReference type="ChEBI" id="CHEBI:78442"/>
        <dbReference type="ChEBI" id="CHEBI:78534"/>
        <dbReference type="ChEBI" id="CHEBI:456215"/>
        <dbReference type="EC" id="6.1.1.3"/>
    </reaction>
</comment>
<comment type="cofactor">
    <cofactor evidence="1">
        <name>Zn(2+)</name>
        <dbReference type="ChEBI" id="CHEBI:29105"/>
    </cofactor>
    <text evidence="1">Binds 1 zinc ion per subunit.</text>
</comment>
<comment type="subunit">
    <text evidence="1">Homodimer.</text>
</comment>
<comment type="subcellular location">
    <subcellularLocation>
        <location evidence="1">Cytoplasm</location>
    </subcellularLocation>
</comment>
<comment type="similarity">
    <text evidence="1">Belongs to the class-II aminoacyl-tRNA synthetase family.</text>
</comment>
<sequence length="687" mass="76972">MAHLIEAAPNPHQPFVVTAGVAVGAAMRELELPNKGPEAIVCVKDSEGTLRDLSFVPEQDSKFTPVPANTEDGRTVIRHSCTHVLAQAVQAEFPGTKLGIGPAIENGFYYDFDVAEPFTPEDLQKLEKRMKKIVKQGQKFERRIFASVAEAEEALKNEPYKLELIRDKGNVDPGSDEATEIGAGDLTGYYNVNPRTGEVDWYDLCRGPHVPTTKYIPAFALTRSSAAYWRGDQSLAGLQRIYGTAWESKEALEEYQLMMAEAEKRDHRRLGAELDLFSFPDEIGSGFPVFHPNGGIVRLEMEEHSRRRHINAGYSFVNTPHITKGDLFKKSGHLDFYADGMFPPMQLDGEVDEEGNVVKQAQDYYAKPMNCPMHNLIFASRGRSYRELPLRLFEFGTVYRYEKSGVIHGLTRARGFTQDDAHIYCTEDQLEQELTSVLDFIISLLRDYGLDDFYLELSTKDPNKFVGSDEIWEKSTSILQRVATKSGLELVPDPAGAAFYGPKISVQARDAIGRTWQMSTVQLDFNLPERFNLEYTSSDGSKKRPIMIHRALFGSIERFFGVLLEHYAGAFPAWLAPHQVIGIPVADSFSEHLEKVTGMLRDNGVRASVDTSDDRMQKKIRNHTTGKVPFMLLAGARDVEANAVSFRFLDGTQINGVPVDKAIGVITQWISSRNNKQPSEETVKKLV</sequence>
<keyword id="KW-0030">Aminoacyl-tRNA synthetase</keyword>
<keyword id="KW-0067">ATP-binding</keyword>
<keyword id="KW-0963">Cytoplasm</keyword>
<keyword id="KW-0436">Ligase</keyword>
<keyword id="KW-0479">Metal-binding</keyword>
<keyword id="KW-0547">Nucleotide-binding</keyword>
<keyword id="KW-0648">Protein biosynthesis</keyword>
<keyword id="KW-1185">Reference proteome</keyword>
<keyword id="KW-0694">RNA-binding</keyword>
<keyword id="KW-0820">tRNA-binding</keyword>
<keyword id="KW-0862">Zinc</keyword>
<name>SYT_CORDI</name>
<gene>
    <name evidence="1" type="primary">thrS</name>
    <name type="ordered locus">DIP1388</name>
</gene>
<protein>
    <recommendedName>
        <fullName evidence="1">Threonine--tRNA ligase</fullName>
        <ecNumber evidence="1">6.1.1.3</ecNumber>
    </recommendedName>
    <alternativeName>
        <fullName evidence="1">Threonyl-tRNA synthetase</fullName>
        <shortName evidence="1">ThrRS</shortName>
    </alternativeName>
</protein>
<reference key="1">
    <citation type="journal article" date="2003" name="Nucleic Acids Res.">
        <title>The complete genome sequence and analysis of Corynebacterium diphtheriae NCTC13129.</title>
        <authorList>
            <person name="Cerdeno-Tarraga A.-M."/>
            <person name="Efstratiou A."/>
            <person name="Dover L.G."/>
            <person name="Holden M.T.G."/>
            <person name="Pallen M.J."/>
            <person name="Bentley S.D."/>
            <person name="Besra G.S."/>
            <person name="Churcher C.M."/>
            <person name="James K.D."/>
            <person name="De Zoysa A."/>
            <person name="Chillingworth T."/>
            <person name="Cronin A."/>
            <person name="Dowd L."/>
            <person name="Feltwell T."/>
            <person name="Hamlin N."/>
            <person name="Holroyd S."/>
            <person name="Jagels K."/>
            <person name="Moule S."/>
            <person name="Quail M.A."/>
            <person name="Rabbinowitsch E."/>
            <person name="Rutherford K.M."/>
            <person name="Thomson N.R."/>
            <person name="Unwin L."/>
            <person name="Whitehead S."/>
            <person name="Barrell B.G."/>
            <person name="Parkhill J."/>
        </authorList>
    </citation>
    <scope>NUCLEOTIDE SEQUENCE [LARGE SCALE GENOMIC DNA]</scope>
    <source>
        <strain>ATCC 700971 / NCTC 13129 / Biotype gravis</strain>
    </source>
</reference>
<evidence type="ECO:0000255" key="1">
    <source>
        <dbReference type="HAMAP-Rule" id="MF_00184"/>
    </source>
</evidence>
<evidence type="ECO:0000255" key="2">
    <source>
        <dbReference type="PROSITE-ProRule" id="PRU01228"/>
    </source>
</evidence>
<accession>Q6NGW2</accession>
<organism>
    <name type="scientific">Corynebacterium diphtheriae (strain ATCC 700971 / NCTC 13129 / Biotype gravis)</name>
    <dbReference type="NCBI Taxonomy" id="257309"/>
    <lineage>
        <taxon>Bacteria</taxon>
        <taxon>Bacillati</taxon>
        <taxon>Actinomycetota</taxon>
        <taxon>Actinomycetes</taxon>
        <taxon>Mycobacteriales</taxon>
        <taxon>Corynebacteriaceae</taxon>
        <taxon>Corynebacterium</taxon>
    </lineage>
</organism>